<sequence length="1259" mass="140622">MDEQSSGQDVDQSLDTLLKEIDLKMQLRDGEEGRRASAQSEGSLRLPAVRMLERGMVASASHKSVTFDEEPPSVHEYSVVMDSSAGTSECAEEEREGADGYECAADTMRVLYDEDTDSSCMGSERALAGPAAEGIVPEGYKEADLLGTERAGSGTPSLSYDDAAGLGSPPHVIFTIKPTSPLNAYDRGSWEPLQSNTAMDTPPRGGTAVSQHGLFAKAPKLPAIPSPNSRRRVSYAGSDSYPSDDSATDKRSLTDKTVPDNRGENERGGFGYENSDRNPSIETGTTDEYQSAGEYKSMSSSEANDDSKTEASVEDLRISNKPQRDTTIQDLHATTLPRSSSTLIPPALPPLDPSFFGRLARSPSYSPIRDRGSSEGSVGEHDSSLEQDHELGMGQQSARTNSSASGNSSDSVMVKPLSLFSNSQVDSLHLGAPAPDNSTPNKEALPSACPPDAMKSIGTQTSILEDKAESGPSQSSATSEKSVMLPNFPRFESFFDDSYPFGHDSDRSNNSVSYSKRTLKPSNYLSIWHLQEAQMRHDSPAFSANSQFSCKMVGESKRTSLESSRLSAKYESRFKFKFKPKLVSRRRIYYNKDQWRNFQEPPTRYYSNCTESDHISSDVPGTPVSPSIKSRNLCHGRTRGNMKMVERVNSLCSANERLSSAGNGDETFLSASSNLDVTSRRPSVDIISEISTKDLLPKIKQDSDGFNELIKTFVDHDEQSQQTDSTIASYRRGTRDTTIYHIWEHSIQENSISDYGNSPTAGKGTISKLLDNHEVEFDGKNSFVTGLGIIKKTDQDSRVDVLRIDSTQGIEAIQSFSPYSYRNAFDPVTPTKSAYHGCEALQASQMGTPFRPAISTTLQAQSGLGHKRPAVERPTTAQLGNYVSAEMSPEVQEPAEETKKRTDLQDNGQLYFVFVGIEQLALRDIERHSAECSIEFDNGNNVVQSEWLPLPKSGSMSLNQEYSVIIAEESLPNMIITLKCRYKSPKKELVEITEKVPLKSKCCGLGKPKYKQVKKLLRREMDFDEWDYKIAQDGSFARCKEQIDEELLKNVRYKKQQFRWTLLSEWERDHSKEHKRKRAWELPRLPAHPAGALVVDMCYLPRTSRFEKFPKTLQIARRVVNKFKEQKAIAMEGFMWQEGGDTEVLKRRYFTLNGTQLVAHHEITKKPKAMINLLRVEKLLTEAEISREMLSSSSRCFTDLVLLHECFVLFFENGEEIMFNPDTKTEKLEWIEKLRKVIELNRFHQPWVKKFLNSSENIL</sequence>
<organism>
    <name type="scientific">Eremothecium gossypii (strain ATCC 10895 / CBS 109.51 / FGSC 9923 / NRRL Y-1056)</name>
    <name type="common">Yeast</name>
    <name type="synonym">Ashbya gossypii</name>
    <dbReference type="NCBI Taxonomy" id="284811"/>
    <lineage>
        <taxon>Eukaryota</taxon>
        <taxon>Fungi</taxon>
        <taxon>Dikarya</taxon>
        <taxon>Ascomycota</taxon>
        <taxon>Saccharomycotina</taxon>
        <taxon>Saccharomycetes</taxon>
        <taxon>Saccharomycetales</taxon>
        <taxon>Saccharomycetaceae</taxon>
        <taxon>Eremothecium</taxon>
    </lineage>
</organism>
<accession>Q751K7</accession>
<protein>
    <recommendedName>
        <fullName>Bud site selection protein 4 homolog</fullName>
    </recommendedName>
</protein>
<dbReference type="EMBL" id="AE016820">
    <property type="protein sequence ID" value="AAS54185.1"/>
    <property type="molecule type" value="Genomic_DNA"/>
</dbReference>
<dbReference type="RefSeq" id="NP_986361.1">
    <property type="nucleotide sequence ID" value="NM_211423.1"/>
</dbReference>
<dbReference type="FunCoup" id="Q751K7">
    <property type="interactions" value="194"/>
</dbReference>
<dbReference type="STRING" id="284811.Q751K7"/>
<dbReference type="EnsemblFungi" id="AAS54185">
    <property type="protein sequence ID" value="AAS54185"/>
    <property type="gene ID" value="AGOS_AGL306C"/>
</dbReference>
<dbReference type="GeneID" id="4622654"/>
<dbReference type="KEGG" id="ago:AGOS_AGL306C"/>
<dbReference type="eggNOG" id="ENOG502REBM">
    <property type="taxonomic scope" value="Eukaryota"/>
</dbReference>
<dbReference type="HOGENOM" id="CLU_257732_0_0_1"/>
<dbReference type="InParanoid" id="Q751K7"/>
<dbReference type="OMA" id="GSFARCK"/>
<dbReference type="OrthoDB" id="2123378at2759"/>
<dbReference type="Proteomes" id="UP000000591">
    <property type="component" value="Chromosome VII"/>
</dbReference>
<dbReference type="GO" id="GO:0030428">
    <property type="term" value="C:cell septum"/>
    <property type="evidence" value="ECO:0007669"/>
    <property type="project" value="UniProtKB-SubCell"/>
</dbReference>
<dbReference type="GO" id="GO:0000142">
    <property type="term" value="C:cellular bud neck contractile ring"/>
    <property type="evidence" value="ECO:0000318"/>
    <property type="project" value="GO_Central"/>
</dbReference>
<dbReference type="GO" id="GO:0005525">
    <property type="term" value="F:GTP binding"/>
    <property type="evidence" value="ECO:0000318"/>
    <property type="project" value="GO_Central"/>
</dbReference>
<dbReference type="GO" id="GO:0007120">
    <property type="term" value="P:axial cellular bud site selection"/>
    <property type="evidence" value="ECO:0000318"/>
    <property type="project" value="GO_Central"/>
</dbReference>
<dbReference type="GO" id="GO:0097271">
    <property type="term" value="P:protein localization to bud neck"/>
    <property type="evidence" value="ECO:0000318"/>
    <property type="project" value="GO_Central"/>
</dbReference>
<dbReference type="CDD" id="cd13278">
    <property type="entry name" value="PH_Bud4"/>
    <property type="match status" value="1"/>
</dbReference>
<dbReference type="Gene3D" id="2.30.29.30">
    <property type="entry name" value="Pleckstrin-homology domain (PH domain)/Phosphotyrosine-binding domain (PTB)"/>
    <property type="match status" value="1"/>
</dbReference>
<dbReference type="InterPro" id="IPR052007">
    <property type="entry name" value="Bud4"/>
</dbReference>
<dbReference type="InterPro" id="IPR011993">
    <property type="entry name" value="PH-like_dom_sf"/>
</dbReference>
<dbReference type="InterPro" id="IPR001849">
    <property type="entry name" value="PH_domain"/>
</dbReference>
<dbReference type="PANTHER" id="PTHR36100">
    <property type="entry name" value="BUD SITE SELECTION PROTEIN 4"/>
    <property type="match status" value="1"/>
</dbReference>
<dbReference type="PANTHER" id="PTHR36100:SF1">
    <property type="entry name" value="BUD SITE SELECTION PROTEIN 4"/>
    <property type="match status" value="1"/>
</dbReference>
<dbReference type="Pfam" id="PF00169">
    <property type="entry name" value="PH"/>
    <property type="match status" value="1"/>
</dbReference>
<dbReference type="SMART" id="SM00233">
    <property type="entry name" value="PH"/>
    <property type="match status" value="1"/>
</dbReference>
<dbReference type="SUPFAM" id="SSF50729">
    <property type="entry name" value="PH domain-like"/>
    <property type="match status" value="1"/>
</dbReference>
<dbReference type="PROSITE" id="PS50003">
    <property type="entry name" value="PH_DOMAIN"/>
    <property type="match status" value="1"/>
</dbReference>
<evidence type="ECO:0000250" key="1"/>
<evidence type="ECO:0000255" key="2">
    <source>
        <dbReference type="PROSITE-ProRule" id="PRU00145"/>
    </source>
</evidence>
<evidence type="ECO:0000256" key="3">
    <source>
        <dbReference type="SAM" id="MobiDB-lite"/>
    </source>
</evidence>
<evidence type="ECO:0000305" key="4"/>
<gene>
    <name type="primary">BUD4</name>
    <name type="ordered locus">AGL306C</name>
</gene>
<proteinExistence type="inferred from homology"/>
<reference key="1">
    <citation type="journal article" date="2004" name="Science">
        <title>The Ashbya gossypii genome as a tool for mapping the ancient Saccharomyces cerevisiae genome.</title>
        <authorList>
            <person name="Dietrich F.S."/>
            <person name="Voegeli S."/>
            <person name="Brachat S."/>
            <person name="Lerch A."/>
            <person name="Gates K."/>
            <person name="Steiner S."/>
            <person name="Mohr C."/>
            <person name="Poehlmann R."/>
            <person name="Luedi P."/>
            <person name="Choi S."/>
            <person name="Wing R.A."/>
            <person name="Flavier A."/>
            <person name="Gaffney T.D."/>
            <person name="Philippsen P."/>
        </authorList>
    </citation>
    <scope>NUCLEOTIDE SEQUENCE [LARGE SCALE GENOMIC DNA]</scope>
    <source>
        <strain>ATCC 10895 / CBS 109.51 / FGSC 9923 / NRRL Y-1056</strain>
    </source>
</reference>
<reference key="2">
    <citation type="journal article" date="2013" name="G3 (Bethesda)">
        <title>Genomes of Ashbya fungi isolated from insects reveal four mating-type loci, numerous translocations, lack of transposons, and distinct gene duplications.</title>
        <authorList>
            <person name="Dietrich F.S."/>
            <person name="Voegeli S."/>
            <person name="Kuo S."/>
            <person name="Philippsen P."/>
        </authorList>
    </citation>
    <scope>GENOME REANNOTATION</scope>
    <source>
        <strain>ATCC 10895 / CBS 109.51 / FGSC 9923 / NRRL Y-1056</strain>
    </source>
</reference>
<name>BUD4_EREGS</name>
<keyword id="KW-0131">Cell cycle</keyword>
<keyword id="KW-0132">Cell division</keyword>
<keyword id="KW-1185">Reference proteome</keyword>
<feature type="chain" id="PRO_0000330078" description="Bud site selection protein 4 homolog">
    <location>
        <begin position="1"/>
        <end position="1259"/>
    </location>
</feature>
<feature type="domain" description="PH" evidence="2">
    <location>
        <begin position="1128"/>
        <end position="1239"/>
    </location>
</feature>
<feature type="region of interest" description="Disordered" evidence="3">
    <location>
        <begin position="185"/>
        <end position="416"/>
    </location>
</feature>
<feature type="region of interest" description="Disordered" evidence="3">
    <location>
        <begin position="428"/>
        <end position="455"/>
    </location>
</feature>
<feature type="region of interest" description="Disordered" evidence="3">
    <location>
        <begin position="862"/>
        <end position="902"/>
    </location>
</feature>
<feature type="compositionally biased region" description="Basic and acidic residues" evidence="3">
    <location>
        <begin position="247"/>
        <end position="267"/>
    </location>
</feature>
<feature type="compositionally biased region" description="Polar residues" evidence="3">
    <location>
        <begin position="277"/>
        <end position="289"/>
    </location>
</feature>
<feature type="compositionally biased region" description="Basic and acidic residues" evidence="3">
    <location>
        <begin position="305"/>
        <end position="324"/>
    </location>
</feature>
<feature type="compositionally biased region" description="Basic and acidic residues" evidence="3">
    <location>
        <begin position="368"/>
        <end position="391"/>
    </location>
</feature>
<feature type="compositionally biased region" description="Low complexity" evidence="3">
    <location>
        <begin position="397"/>
        <end position="411"/>
    </location>
</feature>
<comment type="function">
    <text evidence="1">May be involved in the septin organization at the site of septation.</text>
</comment>
<comment type="subcellular location">
    <subcellularLocation>
        <location evidence="1">Cell septum</location>
    </subcellularLocation>
    <text evidence="1">Localizes to two distinct rings on septal sites.</text>
</comment>
<comment type="similarity">
    <text evidence="4">Belongs to the BUD4 family.</text>
</comment>